<comment type="function">
    <text evidence="5 6 7 8">V region of the variable domain of immunoglobulin light chains that participates in the antigen recognition (PubMed:24600447). Immunoglobulins, also known as antibodies, are membrane-bound or secreted glycoproteins produced by B lymphocytes. In the recognition phase of humoral immunity, the membrane-bound immunoglobulins serve as receptors which, upon binding of a specific antigen, trigger the clonal expansion and differentiation of B lymphocytes into immunoglobulins-secreting plasma cells. Secreted immunoglobulins mediate the effector phase of humoral immunity, which results in the elimination of bound antigens (PubMed:20176268, PubMed:22158414). The antigen binding site is formed by the variable domain of one heavy chain, together with that of its associated light chain. Thus, each immunoglobulin has two antigen binding sites with remarkable affinity for a particular antigen. The variable domains are assembled by a process called V-(D)-J rearrangement and can then be subjected to somatic hypermutations which, after exposure to antigen and selection, allow affinity maturation for a particular antigen (PubMed:17576170, PubMed:20176268).</text>
</comment>
<comment type="subunit">
    <text evidence="6">Immunoglobulins are composed of two identical heavy chains and two identical light chains; disulfide-linked.</text>
</comment>
<comment type="subcellular location">
    <subcellularLocation>
        <location evidence="6 7">Secreted</location>
    </subcellularLocation>
    <subcellularLocation>
        <location evidence="6 7">Cell membrane</location>
    </subcellularLocation>
</comment>
<comment type="polymorphism">
    <text>There are several alleles. The sequence shown is that of IMGT allele IGKV1-16*02.</text>
</comment>
<comment type="caution">
    <text evidence="10">For an example of a full-length immunoglobulin kappa light chain see AC P0DOX7.</text>
</comment>
<organism>
    <name type="scientific">Homo sapiens</name>
    <name type="common">Human</name>
    <dbReference type="NCBI Taxonomy" id="9606"/>
    <lineage>
        <taxon>Eukaryota</taxon>
        <taxon>Metazoa</taxon>
        <taxon>Chordata</taxon>
        <taxon>Craniata</taxon>
        <taxon>Vertebrata</taxon>
        <taxon>Euteleostomi</taxon>
        <taxon>Mammalia</taxon>
        <taxon>Eutheria</taxon>
        <taxon>Euarchontoglires</taxon>
        <taxon>Primates</taxon>
        <taxon>Haplorrhini</taxon>
        <taxon>Catarrhini</taxon>
        <taxon>Hominidae</taxon>
        <taxon>Homo</taxon>
    </lineage>
</organism>
<protein>
    <recommendedName>
        <fullName evidence="4 9">Immunoglobulin kappa variable 1-16</fullName>
    </recommendedName>
    <alternativeName>
        <fullName evidence="11">Ig kappa chain V-I region BAN</fullName>
    </alternativeName>
</protein>
<proteinExistence type="evidence at protein level"/>
<gene>
    <name evidence="4 9" type="primary">IGKV1-16</name>
</gene>
<feature type="signal peptide" evidence="3">
    <location>
        <begin position="1"/>
        <end position="22"/>
    </location>
</feature>
<feature type="chain" id="PRO_0000059756" description="Immunoglobulin kappa variable 1-16" evidence="3">
    <location>
        <begin position="23"/>
        <end position="117"/>
    </location>
</feature>
<feature type="domain" description="Ig-like" evidence="2">
    <location>
        <begin position="24"/>
        <end position="117" status="greater than"/>
    </location>
</feature>
<feature type="region of interest" description="Framework-1" evidence="1">
    <location>
        <begin position="23"/>
        <end position="45"/>
    </location>
</feature>
<feature type="region of interest" description="Complementarity-determining-1" evidence="1">
    <location>
        <begin position="46"/>
        <end position="56"/>
    </location>
</feature>
<feature type="region of interest" description="Framework-2" evidence="1">
    <location>
        <begin position="57"/>
        <end position="71"/>
    </location>
</feature>
<feature type="region of interest" description="Complementarity-determining-2" evidence="1">
    <location>
        <begin position="72"/>
        <end position="78"/>
    </location>
</feature>
<feature type="region of interest" description="Framework-3" evidence="1">
    <location>
        <begin position="79"/>
        <end position="110"/>
    </location>
</feature>
<feature type="region of interest" description="Complementarity-determining-3" evidence="1">
    <location>
        <begin position="111"/>
        <end position="117" status="greater than"/>
    </location>
</feature>
<feature type="disulfide bond" evidence="2">
    <location>
        <begin position="45"/>
        <end position="110"/>
    </location>
</feature>
<feature type="sequence conflict" description="In Ref. 2; AA sequence." evidence="10" ref="2">
    <original>T</original>
    <variation>I</variation>
    <location>
        <position position="44"/>
    </location>
</feature>
<feature type="sequence conflict" description="In Ref. 2; AA sequence." evidence="10" ref="2">
    <original>SNYLAWF</original>
    <variation>RNDLTWY</variation>
    <location>
        <begin position="52"/>
        <end position="58"/>
    </location>
</feature>
<feature type="sequence conflict" description="In Ref. 2; AA sequence." evidence="10" ref="2">
    <original>S</original>
    <variation>E</variation>
    <location>
        <position position="68"/>
    </location>
</feature>
<feature type="sequence conflict" description="In Ref. 2; AA sequence." evidence="10" ref="2">
    <original>S</original>
    <variation>N</variation>
    <location>
        <position position="75"/>
    </location>
</feature>
<feature type="sequence conflict" description="In Ref. 2; AA sequence." evidence="10" ref="2">
    <original>K</original>
    <variation>R</variation>
    <location>
        <position position="83"/>
    </location>
</feature>
<feature type="sequence conflict" description="In Ref. 2; AA sequence." evidence="10" ref="2">
    <original>S</original>
    <variation>A</variation>
    <location>
        <position position="89"/>
    </location>
</feature>
<feature type="sequence conflict" description="In Ref. 2; AA sequence." evidence="10" ref="2">
    <original>D</original>
    <variation>E</variation>
    <location>
        <position position="92"/>
    </location>
</feature>
<feature type="sequence conflict" description="In Ref. 2; AA sequence." evidence="10" ref="2">
    <original>QQY</original>
    <variation>LQQ</variation>
    <location>
        <begin position="111"/>
        <end position="113"/>
    </location>
</feature>
<feature type="non-terminal residue">
    <location>
        <position position="117"/>
    </location>
</feature>
<evidence type="ECO:0000250" key="1">
    <source>
        <dbReference type="UniProtKB" id="P01602"/>
    </source>
</evidence>
<evidence type="ECO:0000255" key="2">
    <source>
        <dbReference type="PROSITE-ProRule" id="PRU00114"/>
    </source>
</evidence>
<evidence type="ECO:0000269" key="3">
    <source>
    </source>
</evidence>
<evidence type="ECO:0000303" key="4">
    <source>
    </source>
</evidence>
<evidence type="ECO:0000303" key="5">
    <source>
    </source>
</evidence>
<evidence type="ECO:0000303" key="6">
    <source>
    </source>
</evidence>
<evidence type="ECO:0000303" key="7">
    <source>
    </source>
</evidence>
<evidence type="ECO:0000303" key="8">
    <source>
    </source>
</evidence>
<evidence type="ECO:0000303" key="9">
    <source ref="4"/>
</evidence>
<evidence type="ECO:0000305" key="10"/>
<evidence type="ECO:0000305" key="11">
    <source>
    </source>
</evidence>
<accession>P04430</accession>
<accession>A0A0A0MT74</accession>
<sequence>MDMRVLAQLLGLLLLCFPGARCDIQMTQSPSSLSASVGDRVTITCRASQGISNYLAWFQQKPGKAPKSLIYAASSLQSGVPSKFSGSGSGTDFTLTISSLQPEDFATYYCQQYNSYP</sequence>
<name>KV116_HUMAN</name>
<dbReference type="EMBL" id="AC245015">
    <property type="status" value="NOT_ANNOTATED_CDS"/>
    <property type="molecule type" value="Genomic_DNA"/>
</dbReference>
<dbReference type="PIR" id="A01878">
    <property type="entry name" value="K1HUBN"/>
</dbReference>
<dbReference type="EMDB" id="EMD-34410"/>
<dbReference type="EMDB" id="EMD-34411"/>
<dbReference type="SMR" id="P04430"/>
<dbReference type="FunCoup" id="P04430">
    <property type="interactions" value="399"/>
</dbReference>
<dbReference type="IntAct" id="P04430">
    <property type="interactions" value="1"/>
</dbReference>
<dbReference type="IMGT_GENE-DB" id="IGKV1-16"/>
<dbReference type="BioMuta" id="IGKV1-16"/>
<dbReference type="jPOST" id="P04430"/>
<dbReference type="MassIVE" id="P04430"/>
<dbReference type="Ensembl" id="ENST00000479981.1">
    <property type="protein sequence ID" value="ENSP00000417344.1"/>
    <property type="gene ID" value="ENSG00000240864.3"/>
</dbReference>
<dbReference type="Ensembl" id="ENST00000632011.1">
    <property type="protein sequence ID" value="ENSP00000488377.1"/>
    <property type="gene ID" value="ENSG00000282282.1"/>
</dbReference>
<dbReference type="AGR" id="HGNC:5732"/>
<dbReference type="GeneCards" id="IGKV1-16"/>
<dbReference type="HGNC" id="HGNC:5732">
    <property type="gene designation" value="IGKV1-16"/>
</dbReference>
<dbReference type="HPA" id="ENSG00000240864">
    <property type="expression patterns" value="Tissue enhanced (intestine, lymphoid tissue, urinary bladder)"/>
</dbReference>
<dbReference type="neXtProt" id="NX_P04430"/>
<dbReference type="OpenTargets" id="ENSG00000240864"/>
<dbReference type="VEuPathDB" id="HostDB:ENSG00000240864"/>
<dbReference type="GeneTree" id="ENSGT00940000153048"/>
<dbReference type="InParanoid" id="P04430"/>
<dbReference type="OMA" id="QQHNSGI"/>
<dbReference type="OrthoDB" id="9629570at2759"/>
<dbReference type="PAN-GO" id="P04430">
    <property type="GO annotations" value="3 GO annotations based on evolutionary models"/>
</dbReference>
<dbReference type="PhylomeDB" id="P04430"/>
<dbReference type="PathwayCommons" id="P04430"/>
<dbReference type="Reactome" id="R-HSA-166663">
    <property type="pathway name" value="Initial triggering of complement"/>
</dbReference>
<dbReference type="Reactome" id="R-HSA-173623">
    <property type="pathway name" value="Classical antibody-mediated complement activation"/>
</dbReference>
<dbReference type="Reactome" id="R-HSA-198933">
    <property type="pathway name" value="Immunoregulatory interactions between a Lymphoid and a non-Lymphoid cell"/>
</dbReference>
<dbReference type="Reactome" id="R-HSA-202733">
    <property type="pathway name" value="Cell surface interactions at the vascular wall"/>
</dbReference>
<dbReference type="Reactome" id="R-HSA-2029481">
    <property type="pathway name" value="FCGR activation"/>
</dbReference>
<dbReference type="Reactome" id="R-HSA-2029482">
    <property type="pathway name" value="Regulation of actin dynamics for phagocytic cup formation"/>
</dbReference>
<dbReference type="Reactome" id="R-HSA-2029485">
    <property type="pathway name" value="Role of phospholipids in phagocytosis"/>
</dbReference>
<dbReference type="Reactome" id="R-HSA-2168880">
    <property type="pathway name" value="Scavenging of heme from plasma"/>
</dbReference>
<dbReference type="Reactome" id="R-HSA-2454202">
    <property type="pathway name" value="Fc epsilon receptor (FCERI) signaling"/>
</dbReference>
<dbReference type="Reactome" id="R-HSA-2730905">
    <property type="pathway name" value="Role of LAT2/NTAL/LAB on calcium mobilization"/>
</dbReference>
<dbReference type="Reactome" id="R-HSA-2871796">
    <property type="pathway name" value="FCERI mediated MAPK activation"/>
</dbReference>
<dbReference type="Reactome" id="R-HSA-2871809">
    <property type="pathway name" value="FCERI mediated Ca+2 mobilization"/>
</dbReference>
<dbReference type="Reactome" id="R-HSA-2871837">
    <property type="pathway name" value="FCERI mediated NF-kB activation"/>
</dbReference>
<dbReference type="Reactome" id="R-HSA-5690714">
    <property type="pathway name" value="CD22 mediated BCR regulation"/>
</dbReference>
<dbReference type="Reactome" id="R-HSA-9664323">
    <property type="pathway name" value="FCGR3A-mediated IL10 synthesis"/>
</dbReference>
<dbReference type="Reactome" id="R-HSA-9664422">
    <property type="pathway name" value="FCGR3A-mediated phagocytosis"/>
</dbReference>
<dbReference type="Reactome" id="R-HSA-9679191">
    <property type="pathway name" value="Potential therapeutics for SARS"/>
</dbReference>
<dbReference type="Reactome" id="R-HSA-977606">
    <property type="pathway name" value="Regulation of Complement cascade"/>
</dbReference>
<dbReference type="Reactome" id="R-HSA-983695">
    <property type="pathway name" value="Antigen activates B Cell Receptor (BCR) leading to generation of second messengers"/>
</dbReference>
<dbReference type="Pharos" id="P04430">
    <property type="development level" value="Tdark"/>
</dbReference>
<dbReference type="PRO" id="PR:P04430"/>
<dbReference type="Proteomes" id="UP000005640">
    <property type="component" value="Chromosome 2"/>
</dbReference>
<dbReference type="RNAct" id="P04430">
    <property type="molecule type" value="protein"/>
</dbReference>
<dbReference type="Bgee" id="ENSG00000240864">
    <property type="expression patterns" value="Expressed in rectum and 92 other cell types or tissues"/>
</dbReference>
<dbReference type="GO" id="GO:0005576">
    <property type="term" value="C:extracellular region"/>
    <property type="evidence" value="ECO:0000304"/>
    <property type="project" value="Reactome"/>
</dbReference>
<dbReference type="GO" id="GO:0019814">
    <property type="term" value="C:immunoglobulin complex"/>
    <property type="evidence" value="ECO:0000318"/>
    <property type="project" value="GO_Central"/>
</dbReference>
<dbReference type="GO" id="GO:0005886">
    <property type="term" value="C:plasma membrane"/>
    <property type="evidence" value="ECO:0000304"/>
    <property type="project" value="Reactome"/>
</dbReference>
<dbReference type="GO" id="GO:0003823">
    <property type="term" value="F:antigen binding"/>
    <property type="evidence" value="ECO:0000303"/>
    <property type="project" value="UniProtKB"/>
</dbReference>
<dbReference type="GO" id="GO:0002250">
    <property type="term" value="P:adaptive immune response"/>
    <property type="evidence" value="ECO:0007669"/>
    <property type="project" value="UniProtKB-KW"/>
</dbReference>
<dbReference type="GO" id="GO:0006955">
    <property type="term" value="P:immune response"/>
    <property type="evidence" value="ECO:0000318"/>
    <property type="project" value="GO_Central"/>
</dbReference>
<dbReference type="CDD" id="cd04980">
    <property type="entry name" value="IgV_L_kappa"/>
    <property type="match status" value="1"/>
</dbReference>
<dbReference type="FunFam" id="2.60.40.10:FF:000212">
    <property type="entry name" value="Immunoglobulin kappa chain variable 12-38"/>
    <property type="match status" value="1"/>
</dbReference>
<dbReference type="Gene3D" id="2.60.40.10">
    <property type="entry name" value="Immunoglobulins"/>
    <property type="match status" value="1"/>
</dbReference>
<dbReference type="InterPro" id="IPR007110">
    <property type="entry name" value="Ig-like_dom"/>
</dbReference>
<dbReference type="InterPro" id="IPR036179">
    <property type="entry name" value="Ig-like_dom_sf"/>
</dbReference>
<dbReference type="InterPro" id="IPR013783">
    <property type="entry name" value="Ig-like_fold"/>
</dbReference>
<dbReference type="InterPro" id="IPR003599">
    <property type="entry name" value="Ig_sub"/>
</dbReference>
<dbReference type="InterPro" id="IPR013106">
    <property type="entry name" value="Ig_V-set"/>
</dbReference>
<dbReference type="InterPro" id="IPR050150">
    <property type="entry name" value="IgV_Light_Chain"/>
</dbReference>
<dbReference type="PANTHER" id="PTHR23267">
    <property type="entry name" value="IMMUNOGLOBULIN LIGHT CHAIN"/>
    <property type="match status" value="1"/>
</dbReference>
<dbReference type="Pfam" id="PF07686">
    <property type="entry name" value="V-set"/>
    <property type="match status" value="1"/>
</dbReference>
<dbReference type="SMART" id="SM00409">
    <property type="entry name" value="IG"/>
    <property type="match status" value="1"/>
</dbReference>
<dbReference type="SMART" id="SM00406">
    <property type="entry name" value="IGv"/>
    <property type="match status" value="1"/>
</dbReference>
<dbReference type="SUPFAM" id="SSF48726">
    <property type="entry name" value="Immunoglobulin"/>
    <property type="match status" value="1"/>
</dbReference>
<dbReference type="PROSITE" id="PS50835">
    <property type="entry name" value="IG_LIKE"/>
    <property type="match status" value="1"/>
</dbReference>
<reference key="1">
    <citation type="journal article" date="2005" name="Nature">
        <title>Generation and annotation of the DNA sequences of human chromosomes 2 and 4.</title>
        <authorList>
            <person name="Hillier L.W."/>
            <person name="Graves T.A."/>
            <person name="Fulton R.S."/>
            <person name="Fulton L.A."/>
            <person name="Pepin K.H."/>
            <person name="Minx P."/>
            <person name="Wagner-McPherson C."/>
            <person name="Layman D."/>
            <person name="Wylie K."/>
            <person name="Sekhon M."/>
            <person name="Becker M.C."/>
            <person name="Fewell G.A."/>
            <person name="Delehaunty K.D."/>
            <person name="Miner T.L."/>
            <person name="Nash W.E."/>
            <person name="Kremitzki C."/>
            <person name="Oddy L."/>
            <person name="Du H."/>
            <person name="Sun H."/>
            <person name="Bradshaw-Cordum H."/>
            <person name="Ali J."/>
            <person name="Carter J."/>
            <person name="Cordes M."/>
            <person name="Harris A."/>
            <person name="Isak A."/>
            <person name="van Brunt A."/>
            <person name="Nguyen C."/>
            <person name="Du F."/>
            <person name="Courtney L."/>
            <person name="Kalicki J."/>
            <person name="Ozersky P."/>
            <person name="Abbott S."/>
            <person name="Armstrong J."/>
            <person name="Belter E.A."/>
            <person name="Caruso L."/>
            <person name="Cedroni M."/>
            <person name="Cotton M."/>
            <person name="Davidson T."/>
            <person name="Desai A."/>
            <person name="Elliott G."/>
            <person name="Erb T."/>
            <person name="Fronick C."/>
            <person name="Gaige T."/>
            <person name="Haakenson W."/>
            <person name="Haglund K."/>
            <person name="Holmes A."/>
            <person name="Harkins R."/>
            <person name="Kim K."/>
            <person name="Kruchowski S.S."/>
            <person name="Strong C.M."/>
            <person name="Grewal N."/>
            <person name="Goyea E."/>
            <person name="Hou S."/>
            <person name="Levy A."/>
            <person name="Martinka S."/>
            <person name="Mead K."/>
            <person name="McLellan M.D."/>
            <person name="Meyer R."/>
            <person name="Randall-Maher J."/>
            <person name="Tomlinson C."/>
            <person name="Dauphin-Kohlberg S."/>
            <person name="Kozlowicz-Reilly A."/>
            <person name="Shah N."/>
            <person name="Swearengen-Shahid S."/>
            <person name="Snider J."/>
            <person name="Strong J.T."/>
            <person name="Thompson J."/>
            <person name="Yoakum M."/>
            <person name="Leonard S."/>
            <person name="Pearman C."/>
            <person name="Trani L."/>
            <person name="Radionenko M."/>
            <person name="Waligorski J.E."/>
            <person name="Wang C."/>
            <person name="Rock S.M."/>
            <person name="Tin-Wollam A.-M."/>
            <person name="Maupin R."/>
            <person name="Latreille P."/>
            <person name="Wendl M.C."/>
            <person name="Yang S.-P."/>
            <person name="Pohl C."/>
            <person name="Wallis J.W."/>
            <person name="Spieth J."/>
            <person name="Bieri T.A."/>
            <person name="Berkowicz N."/>
            <person name="Nelson J.O."/>
            <person name="Osborne J."/>
            <person name="Ding L."/>
            <person name="Meyer R."/>
            <person name="Sabo A."/>
            <person name="Shotland Y."/>
            <person name="Sinha P."/>
            <person name="Wohldmann P.E."/>
            <person name="Cook L.L."/>
            <person name="Hickenbotham M.T."/>
            <person name="Eldred J."/>
            <person name="Williams D."/>
            <person name="Jones T.A."/>
            <person name="She X."/>
            <person name="Ciccarelli F.D."/>
            <person name="Izaurralde E."/>
            <person name="Taylor J."/>
            <person name="Schmutz J."/>
            <person name="Myers R.M."/>
            <person name="Cox D.R."/>
            <person name="Huang X."/>
            <person name="McPherson J.D."/>
            <person name="Mardis E.R."/>
            <person name="Clifton S.W."/>
            <person name="Warren W.C."/>
            <person name="Chinwalla A.T."/>
            <person name="Eddy S.R."/>
            <person name="Marra M.A."/>
            <person name="Ovcharenko I."/>
            <person name="Furey T.S."/>
            <person name="Miller W."/>
            <person name="Eichler E.E."/>
            <person name="Bork P."/>
            <person name="Suyama M."/>
            <person name="Torrents D."/>
            <person name="Waterston R.H."/>
            <person name="Wilson R.K."/>
        </authorList>
    </citation>
    <scope>NUCLEOTIDE SEQUENCE [LARGE SCALE GENOMIC DNA] (IMGT ALLELE IGKV1-16*02)</scope>
</reference>
<reference key="2">
    <citation type="journal article" date="1986" name="Mol. Immunol.">
        <title>Polymorphism in a kappa I primary (AL) amyloid protein (BAN).</title>
        <authorList>
            <person name="Dwulet F.E."/>
            <person name="O'Connor T.P."/>
            <person name="Benson M.D."/>
        </authorList>
    </citation>
    <scope>PROTEIN SEQUENCE OF 23-117</scope>
</reference>
<reference key="3">
    <citation type="journal article" date="2001" name="Exp. Clin. Immunogenet.">
        <title>Nomenclature of the human immunoglobulin kappa (IGK) genes.</title>
        <authorList>
            <person name="Lefranc M.P."/>
        </authorList>
    </citation>
    <scope>NOMEMCLATURE</scope>
</reference>
<reference key="4">
    <citation type="book" date="2001" name="The Immunoglobulin FactsBook.">
        <title>The Immunoglobulin FactsBook.</title>
        <editorList>
            <person name="Lefranc M.P."/>
            <person name="Lefranc G."/>
        </editorList>
        <authorList>
            <person name="Lefranc M.P."/>
            <person name="Lefranc G."/>
        </authorList>
    </citation>
    <scope>NOMENCLATURE</scope>
</reference>
<reference key="5">
    <citation type="journal article" date="2007" name="Annu. Rev. Genet.">
        <title>Immunoglobulin somatic hypermutation.</title>
        <authorList>
            <person name="Teng G."/>
            <person name="Papavasiliou F.N."/>
        </authorList>
    </citation>
    <scope>REVIEW ON SOMATIC HYPERMUTATION</scope>
</reference>
<reference key="6">
    <citation type="journal article" date="2010" name="J. Allergy Clin. Immunol.">
        <title>Structure and function of immunoglobulins.</title>
        <authorList>
            <person name="Schroeder H.W. Jr."/>
            <person name="Cavacini L."/>
        </authorList>
    </citation>
    <scope>REVIEW ON IMMUNOGLOBULINS</scope>
</reference>
<reference key="7">
    <citation type="journal article" date="2012" name="Nat. Rev. Immunol.">
        <title>Molecular programming of B cell memory.</title>
        <authorList>
            <person name="McHeyzer-Williams M."/>
            <person name="Okitsu S."/>
            <person name="Wang N."/>
            <person name="McHeyzer-Williams L."/>
        </authorList>
    </citation>
    <scope>REVIEW ON FUNCTION</scope>
</reference>
<reference key="8">
    <citation type="journal article" date="2014" name="Front. Immunol.">
        <title>Immunoglobulin and T Cell Receptor Genes: IMGT((R)) and the Birth and Rise of Immunoinformatics.</title>
        <authorList>
            <person name="Lefranc M.P."/>
        </authorList>
    </citation>
    <scope>NOMENCLATURE</scope>
</reference>
<keyword id="KW-1064">Adaptive immunity</keyword>
<keyword id="KW-1003">Cell membrane</keyword>
<keyword id="KW-0903">Direct protein sequencing</keyword>
<keyword id="KW-1015">Disulfide bond</keyword>
<keyword id="KW-0391">Immunity</keyword>
<keyword id="KW-1280">Immunoglobulin</keyword>
<keyword id="KW-0393">Immunoglobulin domain</keyword>
<keyword id="KW-0472">Membrane</keyword>
<keyword id="KW-1267">Proteomics identification</keyword>
<keyword id="KW-1185">Reference proteome</keyword>
<keyword id="KW-0964">Secreted</keyword>
<keyword id="KW-0732">Signal</keyword>